<sequence length="478" mass="51509">MPVPSQPLPLHLDPLDPLLSTYHFVGIGGVGMSALAYILAKQGFRVSGSDIVANGRTRRLEALGVRFFQGHSSEGLVGDPQVVYSSAIRPTNPELAAALGKGLTVWHRADLLAALFNRRSGIGVAGTHGKTTTSSMIGYVLLSAGWDPTLIIGGEVDAWDGNARLGKGEYWVAEVDESDGSLVRLYPKIGVITNIELDHPDHYADLGQVIRAFQQYGQQSQTLVACLDCPNVAAHLRVDVGYSLTGHPQAQYQARQILYTASFTCAEIWEKGSLLGQLRLQVLGSHNLSNALAAVAVGRQLGLEFAVIASALAQFRGAHRRFEHKGEVGGVTFIDDYAHHPSEIRATLQAARLQQRRVVAVFQPHRHSRLAALFQDFARCFGEADVVVIVPTYGAGEPAPEGSDSLRLAVAVAEHHPHVRYVSSLPQLPEVLPSVLQPGDLAVFLGAGDLNQQIIATMRAYAAQVREQPGQAKNPNFS</sequence>
<feature type="chain" id="PRO_0000242608" description="UDP-N-acetylmuramate--L-alanine ligase">
    <location>
        <begin position="1"/>
        <end position="478"/>
    </location>
</feature>
<feature type="binding site" evidence="1">
    <location>
        <begin position="126"/>
        <end position="132"/>
    </location>
    <ligand>
        <name>ATP</name>
        <dbReference type="ChEBI" id="CHEBI:30616"/>
    </ligand>
</feature>
<keyword id="KW-0067">ATP-binding</keyword>
<keyword id="KW-0131">Cell cycle</keyword>
<keyword id="KW-0132">Cell division</keyword>
<keyword id="KW-0133">Cell shape</keyword>
<keyword id="KW-0961">Cell wall biogenesis/degradation</keyword>
<keyword id="KW-0963">Cytoplasm</keyword>
<keyword id="KW-0436">Ligase</keyword>
<keyword id="KW-0547">Nucleotide-binding</keyword>
<keyword id="KW-0573">Peptidoglycan synthesis</keyword>
<keyword id="KW-1185">Reference proteome</keyword>
<gene>
    <name evidence="1" type="primary">murC</name>
    <name type="ordered locus">CYB_1559</name>
</gene>
<protein>
    <recommendedName>
        <fullName evidence="1">UDP-N-acetylmuramate--L-alanine ligase</fullName>
        <ecNumber evidence="1">6.3.2.8</ecNumber>
    </recommendedName>
    <alternativeName>
        <fullName evidence="1">UDP-N-acetylmuramoyl-L-alanine synthetase</fullName>
    </alternativeName>
</protein>
<proteinExistence type="inferred from homology"/>
<accession>Q2JL88</accession>
<comment type="function">
    <text evidence="1">Cell wall formation.</text>
</comment>
<comment type="catalytic activity">
    <reaction evidence="1">
        <text>UDP-N-acetyl-alpha-D-muramate + L-alanine + ATP = UDP-N-acetyl-alpha-D-muramoyl-L-alanine + ADP + phosphate + H(+)</text>
        <dbReference type="Rhea" id="RHEA:23372"/>
        <dbReference type="ChEBI" id="CHEBI:15378"/>
        <dbReference type="ChEBI" id="CHEBI:30616"/>
        <dbReference type="ChEBI" id="CHEBI:43474"/>
        <dbReference type="ChEBI" id="CHEBI:57972"/>
        <dbReference type="ChEBI" id="CHEBI:70757"/>
        <dbReference type="ChEBI" id="CHEBI:83898"/>
        <dbReference type="ChEBI" id="CHEBI:456216"/>
        <dbReference type="EC" id="6.3.2.8"/>
    </reaction>
</comment>
<comment type="pathway">
    <text evidence="1">Cell wall biogenesis; peptidoglycan biosynthesis.</text>
</comment>
<comment type="subcellular location">
    <subcellularLocation>
        <location evidence="1">Cytoplasm</location>
    </subcellularLocation>
</comment>
<comment type="similarity">
    <text evidence="1">Belongs to the MurCDEF family.</text>
</comment>
<organism>
    <name type="scientific">Synechococcus sp. (strain JA-2-3B'a(2-13))</name>
    <name type="common">Cyanobacteria bacterium Yellowstone B-Prime</name>
    <dbReference type="NCBI Taxonomy" id="321332"/>
    <lineage>
        <taxon>Bacteria</taxon>
        <taxon>Bacillati</taxon>
        <taxon>Cyanobacteriota</taxon>
        <taxon>Cyanophyceae</taxon>
        <taxon>Synechococcales</taxon>
        <taxon>Synechococcaceae</taxon>
        <taxon>Synechococcus</taxon>
    </lineage>
</organism>
<dbReference type="EC" id="6.3.2.8" evidence="1"/>
<dbReference type="EMBL" id="CP000240">
    <property type="protein sequence ID" value="ABD02523.1"/>
    <property type="molecule type" value="Genomic_DNA"/>
</dbReference>
<dbReference type="RefSeq" id="WP_011433171.1">
    <property type="nucleotide sequence ID" value="NC_007776.1"/>
</dbReference>
<dbReference type="SMR" id="Q2JL88"/>
<dbReference type="STRING" id="321332.CYB_1559"/>
<dbReference type="KEGG" id="cyb:CYB_1559"/>
<dbReference type="eggNOG" id="COG0773">
    <property type="taxonomic scope" value="Bacteria"/>
</dbReference>
<dbReference type="HOGENOM" id="CLU_028104_2_2_3"/>
<dbReference type="UniPathway" id="UPA00219"/>
<dbReference type="Proteomes" id="UP000001938">
    <property type="component" value="Chromosome"/>
</dbReference>
<dbReference type="GO" id="GO:0005737">
    <property type="term" value="C:cytoplasm"/>
    <property type="evidence" value="ECO:0007669"/>
    <property type="project" value="UniProtKB-SubCell"/>
</dbReference>
<dbReference type="GO" id="GO:0005524">
    <property type="term" value="F:ATP binding"/>
    <property type="evidence" value="ECO:0007669"/>
    <property type="project" value="UniProtKB-UniRule"/>
</dbReference>
<dbReference type="GO" id="GO:0008763">
    <property type="term" value="F:UDP-N-acetylmuramate-L-alanine ligase activity"/>
    <property type="evidence" value="ECO:0007669"/>
    <property type="project" value="UniProtKB-UniRule"/>
</dbReference>
<dbReference type="GO" id="GO:0051301">
    <property type="term" value="P:cell division"/>
    <property type="evidence" value="ECO:0007669"/>
    <property type="project" value="UniProtKB-KW"/>
</dbReference>
<dbReference type="GO" id="GO:0071555">
    <property type="term" value="P:cell wall organization"/>
    <property type="evidence" value="ECO:0007669"/>
    <property type="project" value="UniProtKB-KW"/>
</dbReference>
<dbReference type="GO" id="GO:0009252">
    <property type="term" value="P:peptidoglycan biosynthetic process"/>
    <property type="evidence" value="ECO:0007669"/>
    <property type="project" value="UniProtKB-UniRule"/>
</dbReference>
<dbReference type="GO" id="GO:0008360">
    <property type="term" value="P:regulation of cell shape"/>
    <property type="evidence" value="ECO:0007669"/>
    <property type="project" value="UniProtKB-KW"/>
</dbReference>
<dbReference type="Gene3D" id="3.90.190.20">
    <property type="entry name" value="Mur ligase, C-terminal domain"/>
    <property type="match status" value="1"/>
</dbReference>
<dbReference type="Gene3D" id="3.40.1190.10">
    <property type="entry name" value="Mur-like, catalytic domain"/>
    <property type="match status" value="1"/>
</dbReference>
<dbReference type="Gene3D" id="3.40.50.720">
    <property type="entry name" value="NAD(P)-binding Rossmann-like Domain"/>
    <property type="match status" value="1"/>
</dbReference>
<dbReference type="HAMAP" id="MF_00046">
    <property type="entry name" value="MurC"/>
    <property type="match status" value="1"/>
</dbReference>
<dbReference type="InterPro" id="IPR036565">
    <property type="entry name" value="Mur-like_cat_sf"/>
</dbReference>
<dbReference type="InterPro" id="IPR004101">
    <property type="entry name" value="Mur_ligase_C"/>
</dbReference>
<dbReference type="InterPro" id="IPR036615">
    <property type="entry name" value="Mur_ligase_C_dom_sf"/>
</dbReference>
<dbReference type="InterPro" id="IPR013221">
    <property type="entry name" value="Mur_ligase_cen"/>
</dbReference>
<dbReference type="InterPro" id="IPR000713">
    <property type="entry name" value="Mur_ligase_N"/>
</dbReference>
<dbReference type="InterPro" id="IPR050061">
    <property type="entry name" value="MurCDEF_pg_biosynth"/>
</dbReference>
<dbReference type="InterPro" id="IPR005758">
    <property type="entry name" value="UDP-N-AcMur_Ala_ligase_MurC"/>
</dbReference>
<dbReference type="NCBIfam" id="TIGR01082">
    <property type="entry name" value="murC"/>
    <property type="match status" value="1"/>
</dbReference>
<dbReference type="PANTHER" id="PTHR43445:SF3">
    <property type="entry name" value="UDP-N-ACETYLMURAMATE--L-ALANINE LIGASE"/>
    <property type="match status" value="1"/>
</dbReference>
<dbReference type="PANTHER" id="PTHR43445">
    <property type="entry name" value="UDP-N-ACETYLMURAMATE--L-ALANINE LIGASE-RELATED"/>
    <property type="match status" value="1"/>
</dbReference>
<dbReference type="Pfam" id="PF01225">
    <property type="entry name" value="Mur_ligase"/>
    <property type="match status" value="1"/>
</dbReference>
<dbReference type="Pfam" id="PF02875">
    <property type="entry name" value="Mur_ligase_C"/>
    <property type="match status" value="1"/>
</dbReference>
<dbReference type="Pfam" id="PF08245">
    <property type="entry name" value="Mur_ligase_M"/>
    <property type="match status" value="1"/>
</dbReference>
<dbReference type="SUPFAM" id="SSF51984">
    <property type="entry name" value="MurCD N-terminal domain"/>
    <property type="match status" value="1"/>
</dbReference>
<dbReference type="SUPFAM" id="SSF53623">
    <property type="entry name" value="MurD-like peptide ligases, catalytic domain"/>
    <property type="match status" value="1"/>
</dbReference>
<dbReference type="SUPFAM" id="SSF53244">
    <property type="entry name" value="MurD-like peptide ligases, peptide-binding domain"/>
    <property type="match status" value="1"/>
</dbReference>
<name>MURC_SYNJB</name>
<evidence type="ECO:0000255" key="1">
    <source>
        <dbReference type="HAMAP-Rule" id="MF_00046"/>
    </source>
</evidence>
<reference key="1">
    <citation type="journal article" date="2007" name="ISME J.">
        <title>Population level functional diversity in a microbial community revealed by comparative genomic and metagenomic analyses.</title>
        <authorList>
            <person name="Bhaya D."/>
            <person name="Grossman A.R."/>
            <person name="Steunou A.-S."/>
            <person name="Khuri N."/>
            <person name="Cohan F.M."/>
            <person name="Hamamura N."/>
            <person name="Melendrez M.C."/>
            <person name="Bateson M.M."/>
            <person name="Ward D.M."/>
            <person name="Heidelberg J.F."/>
        </authorList>
    </citation>
    <scope>NUCLEOTIDE SEQUENCE [LARGE SCALE GENOMIC DNA]</scope>
    <source>
        <strain>JA-2-3B'a(2-13)</strain>
    </source>
</reference>